<dbReference type="EMBL" id="CP000482">
    <property type="protein sequence ID" value="ABK98326.1"/>
    <property type="molecule type" value="Genomic_DNA"/>
</dbReference>
<dbReference type="RefSeq" id="WP_011734638.1">
    <property type="nucleotide sequence ID" value="NC_008609.1"/>
</dbReference>
<dbReference type="SMR" id="A1ALV6"/>
<dbReference type="STRING" id="338966.Ppro_0695"/>
<dbReference type="KEGG" id="ppd:Ppro_0695"/>
<dbReference type="eggNOG" id="COG0097">
    <property type="taxonomic scope" value="Bacteria"/>
</dbReference>
<dbReference type="HOGENOM" id="CLU_065464_1_2_7"/>
<dbReference type="OrthoDB" id="9805007at2"/>
<dbReference type="Proteomes" id="UP000006732">
    <property type="component" value="Chromosome"/>
</dbReference>
<dbReference type="GO" id="GO:0022625">
    <property type="term" value="C:cytosolic large ribosomal subunit"/>
    <property type="evidence" value="ECO:0007669"/>
    <property type="project" value="TreeGrafter"/>
</dbReference>
<dbReference type="GO" id="GO:0019843">
    <property type="term" value="F:rRNA binding"/>
    <property type="evidence" value="ECO:0007669"/>
    <property type="project" value="UniProtKB-UniRule"/>
</dbReference>
<dbReference type="GO" id="GO:0003735">
    <property type="term" value="F:structural constituent of ribosome"/>
    <property type="evidence" value="ECO:0007669"/>
    <property type="project" value="InterPro"/>
</dbReference>
<dbReference type="GO" id="GO:0002181">
    <property type="term" value="P:cytoplasmic translation"/>
    <property type="evidence" value="ECO:0007669"/>
    <property type="project" value="TreeGrafter"/>
</dbReference>
<dbReference type="FunFam" id="3.90.930.12:FF:000001">
    <property type="entry name" value="50S ribosomal protein L6"/>
    <property type="match status" value="1"/>
</dbReference>
<dbReference type="Gene3D" id="3.90.930.12">
    <property type="entry name" value="Ribosomal protein L6, alpha-beta domain"/>
    <property type="match status" value="2"/>
</dbReference>
<dbReference type="HAMAP" id="MF_01365_B">
    <property type="entry name" value="Ribosomal_uL6_B"/>
    <property type="match status" value="1"/>
</dbReference>
<dbReference type="InterPro" id="IPR000702">
    <property type="entry name" value="Ribosomal_uL6-like"/>
</dbReference>
<dbReference type="InterPro" id="IPR036789">
    <property type="entry name" value="Ribosomal_uL6-like_a/b-dom_sf"/>
</dbReference>
<dbReference type="InterPro" id="IPR020040">
    <property type="entry name" value="Ribosomal_uL6_a/b-dom"/>
</dbReference>
<dbReference type="InterPro" id="IPR019906">
    <property type="entry name" value="Ribosomal_uL6_bac-type"/>
</dbReference>
<dbReference type="InterPro" id="IPR002358">
    <property type="entry name" value="Ribosomal_uL6_CS"/>
</dbReference>
<dbReference type="NCBIfam" id="TIGR03654">
    <property type="entry name" value="L6_bact"/>
    <property type="match status" value="1"/>
</dbReference>
<dbReference type="PANTHER" id="PTHR11655">
    <property type="entry name" value="60S/50S RIBOSOMAL PROTEIN L6/L9"/>
    <property type="match status" value="1"/>
</dbReference>
<dbReference type="PANTHER" id="PTHR11655:SF14">
    <property type="entry name" value="LARGE RIBOSOMAL SUBUNIT PROTEIN UL6M"/>
    <property type="match status" value="1"/>
</dbReference>
<dbReference type="Pfam" id="PF00347">
    <property type="entry name" value="Ribosomal_L6"/>
    <property type="match status" value="2"/>
</dbReference>
<dbReference type="PIRSF" id="PIRSF002162">
    <property type="entry name" value="Ribosomal_L6"/>
    <property type="match status" value="1"/>
</dbReference>
<dbReference type="PRINTS" id="PR00059">
    <property type="entry name" value="RIBOSOMALL6"/>
</dbReference>
<dbReference type="SUPFAM" id="SSF56053">
    <property type="entry name" value="Ribosomal protein L6"/>
    <property type="match status" value="2"/>
</dbReference>
<dbReference type="PROSITE" id="PS00525">
    <property type="entry name" value="RIBOSOMAL_L6_1"/>
    <property type="match status" value="1"/>
</dbReference>
<accession>A1ALV6</accession>
<gene>
    <name evidence="1" type="primary">rplF</name>
    <name type="ordered locus">Ppro_0695</name>
</gene>
<sequence length="179" mass="19362">MSRIGKLPIDISKDVKLAFSDSILSVQGPLGKLSRRIMPCVNLEITDSCIIVMRNDESGTARSAHGLTRTLVSNMVNGVTKGFQKSLEINGVGYRAEVKGSELVLSLGYSHPVVFTIPAGVTIEVDKLTKVVVKGFDKELVGETAAKIRSFRPPEPYKGKGVKYADETILRKAGKTGKK</sequence>
<protein>
    <recommendedName>
        <fullName evidence="1">Large ribosomal subunit protein uL6</fullName>
    </recommendedName>
    <alternativeName>
        <fullName evidence="2">50S ribosomal protein L6</fullName>
    </alternativeName>
</protein>
<proteinExistence type="inferred from homology"/>
<reference key="1">
    <citation type="submission" date="2006-10" db="EMBL/GenBank/DDBJ databases">
        <title>Complete sequence of chromosome of Pelobacter propionicus DSM 2379.</title>
        <authorList>
            <consortium name="US DOE Joint Genome Institute"/>
            <person name="Copeland A."/>
            <person name="Lucas S."/>
            <person name="Lapidus A."/>
            <person name="Barry K."/>
            <person name="Detter J.C."/>
            <person name="Glavina del Rio T."/>
            <person name="Hammon N."/>
            <person name="Israni S."/>
            <person name="Dalin E."/>
            <person name="Tice H."/>
            <person name="Pitluck S."/>
            <person name="Saunders E."/>
            <person name="Brettin T."/>
            <person name="Bruce D."/>
            <person name="Han C."/>
            <person name="Tapia R."/>
            <person name="Schmutz J."/>
            <person name="Larimer F."/>
            <person name="Land M."/>
            <person name="Hauser L."/>
            <person name="Kyrpides N."/>
            <person name="Kim E."/>
            <person name="Lovley D."/>
            <person name="Richardson P."/>
        </authorList>
    </citation>
    <scope>NUCLEOTIDE SEQUENCE [LARGE SCALE GENOMIC DNA]</scope>
    <source>
        <strain>DSM 2379 / NBRC 103807 / OttBd1</strain>
    </source>
</reference>
<comment type="function">
    <text evidence="1">This protein binds to the 23S rRNA, and is important in its secondary structure. It is located near the subunit interface in the base of the L7/L12 stalk, and near the tRNA binding site of the peptidyltransferase center.</text>
</comment>
<comment type="subunit">
    <text evidence="1">Part of the 50S ribosomal subunit.</text>
</comment>
<comment type="similarity">
    <text evidence="1">Belongs to the universal ribosomal protein uL6 family.</text>
</comment>
<name>RL6_PELPD</name>
<evidence type="ECO:0000255" key="1">
    <source>
        <dbReference type="HAMAP-Rule" id="MF_01365"/>
    </source>
</evidence>
<evidence type="ECO:0000305" key="2"/>
<organism>
    <name type="scientific">Pelobacter propionicus (strain DSM 2379 / NBRC 103807 / OttBd1)</name>
    <dbReference type="NCBI Taxonomy" id="338966"/>
    <lineage>
        <taxon>Bacteria</taxon>
        <taxon>Pseudomonadati</taxon>
        <taxon>Thermodesulfobacteriota</taxon>
        <taxon>Desulfuromonadia</taxon>
        <taxon>Desulfuromonadales</taxon>
        <taxon>Desulfuromonadaceae</taxon>
        <taxon>Pelobacter</taxon>
    </lineage>
</organism>
<feature type="chain" id="PRO_1000055281" description="Large ribosomal subunit protein uL6">
    <location>
        <begin position="1"/>
        <end position="179"/>
    </location>
</feature>
<keyword id="KW-1185">Reference proteome</keyword>
<keyword id="KW-0687">Ribonucleoprotein</keyword>
<keyword id="KW-0689">Ribosomal protein</keyword>
<keyword id="KW-0694">RNA-binding</keyword>
<keyword id="KW-0699">rRNA-binding</keyword>